<proteinExistence type="evidence at protein level"/>
<keyword id="KW-0663">Pyridoxal phosphate</keyword>
<keyword id="KW-1185">Reference proteome</keyword>
<keyword id="KW-0808">Transferase</keyword>
<organism>
    <name type="scientific">Staphylococcus aureus (strain NCTC 8325 / PS 47)</name>
    <dbReference type="NCBI Taxonomy" id="93061"/>
    <lineage>
        <taxon>Bacteria</taxon>
        <taxon>Bacillati</taxon>
        <taxon>Bacillota</taxon>
        <taxon>Bacilli</taxon>
        <taxon>Bacillales</taxon>
        <taxon>Staphylococcaceae</taxon>
        <taxon>Staphylococcus</taxon>
    </lineage>
</organism>
<feature type="chain" id="PRO_0000395023" description="N-(2-amino-2-carboxyethyl)-L-glutamate synthase">
    <location>
        <begin position="1"/>
        <end position="326"/>
    </location>
</feature>
<feature type="binding site" evidence="1">
    <location>
        <position position="77"/>
    </location>
    <ligand>
        <name>pyridoxal 5'-phosphate</name>
        <dbReference type="ChEBI" id="CHEBI:597326"/>
    </ligand>
</feature>
<feature type="binding site" evidence="1">
    <location>
        <begin position="185"/>
        <end position="189"/>
    </location>
    <ligand>
        <name>pyridoxal 5'-phosphate</name>
        <dbReference type="ChEBI" id="CHEBI:597326"/>
    </ligand>
</feature>
<feature type="binding site" evidence="1">
    <location>
        <position position="272"/>
    </location>
    <ligand>
        <name>pyridoxal 5'-phosphate</name>
        <dbReference type="ChEBI" id="CHEBI:597326"/>
    </ligand>
</feature>
<feature type="modified residue" description="N6-(pyridoxal phosphate)lysine" evidence="1">
    <location>
        <position position="47"/>
    </location>
</feature>
<dbReference type="EC" id="2.5.1.140" evidence="4"/>
<dbReference type="EMBL" id="AY251022">
    <property type="protein sequence ID" value="AAP82063.1"/>
    <property type="molecule type" value="Genomic_DNA"/>
</dbReference>
<dbReference type="EMBL" id="CP000253">
    <property type="protein sequence ID" value="ABD29258.1"/>
    <property type="status" value="ALT_INIT"/>
    <property type="molecule type" value="Genomic_DNA"/>
</dbReference>
<dbReference type="RefSeq" id="WP_000570808.1">
    <property type="nucleotide sequence ID" value="NZ_LS483365.1"/>
</dbReference>
<dbReference type="RefSeq" id="WP_011446977.1">
    <property type="nucleotide sequence ID" value="NC_007795.1"/>
</dbReference>
<dbReference type="RefSeq" id="YP_498675.1">
    <property type="nucleotide sequence ID" value="NC_007795.1"/>
</dbReference>
<dbReference type="SMR" id="Q2G1N3"/>
<dbReference type="STRING" id="93061.SAOUHSC_00075"/>
<dbReference type="PaxDb" id="1280-SAXN108_0101"/>
<dbReference type="GeneID" id="3919453"/>
<dbReference type="KEGG" id="sao:SAOUHSC_00075"/>
<dbReference type="PATRIC" id="fig|93061.5.peg.64"/>
<dbReference type="eggNOG" id="COG0031">
    <property type="taxonomic scope" value="Bacteria"/>
</dbReference>
<dbReference type="HOGENOM" id="CLU_021018_1_0_9"/>
<dbReference type="OrthoDB" id="9808024at2"/>
<dbReference type="BioCyc" id="MetaCyc:G1I0R-69-MONOMER"/>
<dbReference type="BRENDA" id="2.5.1.140">
    <property type="organism ID" value="3352"/>
</dbReference>
<dbReference type="PRO" id="PR:Q2G1N3"/>
<dbReference type="Proteomes" id="UP000008816">
    <property type="component" value="Chromosome"/>
</dbReference>
<dbReference type="GO" id="GO:0005737">
    <property type="term" value="C:cytoplasm"/>
    <property type="evidence" value="ECO:0000318"/>
    <property type="project" value="GO_Central"/>
</dbReference>
<dbReference type="GO" id="GO:0004124">
    <property type="term" value="F:cysteine synthase activity"/>
    <property type="evidence" value="ECO:0000318"/>
    <property type="project" value="GO_Central"/>
</dbReference>
<dbReference type="GO" id="GO:0019344">
    <property type="term" value="P:cysteine biosynthetic process"/>
    <property type="evidence" value="ECO:0000318"/>
    <property type="project" value="GO_Central"/>
</dbReference>
<dbReference type="GO" id="GO:0006535">
    <property type="term" value="P:cysteine biosynthetic process from serine"/>
    <property type="evidence" value="ECO:0007669"/>
    <property type="project" value="InterPro"/>
</dbReference>
<dbReference type="CDD" id="cd01561">
    <property type="entry name" value="CBS_like"/>
    <property type="match status" value="1"/>
</dbReference>
<dbReference type="Gene3D" id="3.40.50.1100">
    <property type="match status" value="2"/>
</dbReference>
<dbReference type="InterPro" id="IPR050214">
    <property type="entry name" value="Cys_Synth/Cystath_Beta-Synth"/>
</dbReference>
<dbReference type="InterPro" id="IPR001216">
    <property type="entry name" value="P-phosphate_BS"/>
</dbReference>
<dbReference type="InterPro" id="IPR023927">
    <property type="entry name" value="SbnA"/>
</dbReference>
<dbReference type="InterPro" id="IPR001926">
    <property type="entry name" value="TrpB-like_PALP"/>
</dbReference>
<dbReference type="InterPro" id="IPR036052">
    <property type="entry name" value="TrpB-like_PALP_sf"/>
</dbReference>
<dbReference type="NCBIfam" id="TIGR03945">
    <property type="entry name" value="PLP_SbnA_fam"/>
    <property type="match status" value="1"/>
</dbReference>
<dbReference type="PANTHER" id="PTHR10314">
    <property type="entry name" value="CYSTATHIONINE BETA-SYNTHASE"/>
    <property type="match status" value="1"/>
</dbReference>
<dbReference type="Pfam" id="PF00291">
    <property type="entry name" value="PALP"/>
    <property type="match status" value="1"/>
</dbReference>
<dbReference type="SUPFAM" id="SSF53686">
    <property type="entry name" value="Tryptophan synthase beta subunit-like PLP-dependent enzymes"/>
    <property type="match status" value="1"/>
</dbReference>
<dbReference type="PROSITE" id="PS00901">
    <property type="entry name" value="CYS_SYNTHASE"/>
    <property type="match status" value="1"/>
</dbReference>
<reference key="1">
    <citation type="journal article" date="2004" name="Infect. Immun.">
        <title>Role of siderophore biosynthesis in virulence of Staphylococcus aureus: identification and characterization of genes involved in production of a siderophore.</title>
        <authorList>
            <person name="Dale S.E."/>
            <person name="Doherty-Kirby A."/>
            <person name="Lajoie G."/>
            <person name="Heinrichs D.E."/>
        </authorList>
    </citation>
    <scope>NUCLEOTIDE SEQUENCE [GENOMIC DNA]</scope>
    <scope>FUNCTION</scope>
    <scope>NOMENCLATURE</scope>
    <scope>INDUCTION</scope>
</reference>
<reference key="2">
    <citation type="book" date="2006" name="Gram positive pathogens, 2nd edition">
        <title>The Staphylococcus aureus NCTC 8325 genome.</title>
        <editorList>
            <person name="Fischetti V."/>
            <person name="Novick R."/>
            <person name="Ferretti J."/>
            <person name="Portnoy D."/>
            <person name="Rood J."/>
        </editorList>
        <authorList>
            <person name="Gillaspy A.F."/>
            <person name="Worrell V."/>
            <person name="Orvis J."/>
            <person name="Roe B.A."/>
            <person name="Dyer D.W."/>
            <person name="Iandolo J.J."/>
        </authorList>
    </citation>
    <scope>NUCLEOTIDE SEQUENCE [LARGE SCALE GENOMIC DNA]</scope>
    <source>
        <strain>NCTC 8325 / PS 47</strain>
    </source>
</reference>
<reference key="3">
    <citation type="journal article" date="2011" name="BMC Microbiol.">
        <title>Mutation of L-2,3-diaminopropionic acid synthase genes blocks staphyloferrin B synthesis in Staphylococcus aureus.</title>
        <authorList>
            <person name="Beasley F.C."/>
            <person name="Cheung J."/>
            <person name="Heinrichs D.E."/>
        </authorList>
    </citation>
    <scope>FUNCTION</scope>
    <scope>PATHWAY</scope>
    <scope>DISRUPTION PHENOTYPE</scope>
</reference>
<reference key="4">
    <citation type="journal article" date="2014" name="Chem. Biol.">
        <title>Synthesis of L-2,3-diaminopropionic acid, a siderophore and antibiotic precursor.</title>
        <authorList>
            <person name="Kobylarz M.J."/>
            <person name="Grigg J.C."/>
            <person name="Takayama S.J."/>
            <person name="Rai D.K."/>
            <person name="Heinrichs D.E."/>
            <person name="Murphy M.E."/>
        </authorList>
    </citation>
    <scope>FUNCTION</scope>
    <scope>CATALYTIC ACTIVITY</scope>
    <scope>COFACTOR</scope>
</reference>
<comment type="function">
    <text evidence="2 3 4">Catalyzes the synthesis of N-((2S)-2-amino-2-carboxyethyl)-L-glutamate (ACEGA) from O-phospho-L-serine and L-glutamate. Involved in the biosynthesis of L-2,3-diaminopropionic acid (L-Dap), a precursor of staphyloferrin B and antibiotics.</text>
</comment>
<comment type="catalytic activity">
    <reaction evidence="4">
        <text>O-phospho-L-serine + L-glutamate = N-[(2S)-2-amino-2-carboxyethyl]-L-glutamate + phosphate + H(+)</text>
        <dbReference type="Rhea" id="RHEA:52384"/>
        <dbReference type="ChEBI" id="CHEBI:15378"/>
        <dbReference type="ChEBI" id="CHEBI:29985"/>
        <dbReference type="ChEBI" id="CHEBI:43474"/>
        <dbReference type="ChEBI" id="CHEBI:57524"/>
        <dbReference type="ChEBI" id="CHEBI:134610"/>
        <dbReference type="EC" id="2.5.1.140"/>
    </reaction>
    <physiologicalReaction direction="left-to-right" evidence="4">
        <dbReference type="Rhea" id="RHEA:52385"/>
    </physiologicalReaction>
</comment>
<comment type="cofactor">
    <cofactor evidence="4">
        <name>pyridoxal 5'-phosphate</name>
        <dbReference type="ChEBI" id="CHEBI:597326"/>
    </cofactor>
</comment>
<comment type="pathway">
    <text evidence="3">Siderophore biosynthesis.</text>
</comment>
<comment type="subunit">
    <text evidence="1">Homodimer.</text>
</comment>
<comment type="induction">
    <text evidence="2">Up-regulated under iron-deficient growth conditions. Repressed by Fur under iron-rich growth conditions.</text>
</comment>
<comment type="disruption phenotype">
    <text evidence="3">Mutation results in abrogation of synthesis of staphyloferrin B.</text>
</comment>
<comment type="similarity">
    <text evidence="6">Belongs to the cysteine synthase/cystathionine beta-synthase family. SbnA subfamily.</text>
</comment>
<comment type="sequence caution" evidence="6">
    <conflict type="erroneous initiation">
        <sequence resource="EMBL-CDS" id="ABD29258"/>
    </conflict>
    <text>Truncated N-terminus.</text>
</comment>
<gene>
    <name evidence="5" type="primary">sbnA</name>
    <name type="ordered locus">SAOUHSC_00075</name>
</gene>
<name>SBNA_STAA8</name>
<protein>
    <recommendedName>
        <fullName evidence="6">N-(2-amino-2-carboxyethyl)-L-glutamate synthase</fullName>
        <shortName evidence="6">ACEGA synthase</shortName>
        <ecNumber evidence="4">2.5.1.140</ecNumber>
    </recommendedName>
    <alternativeName>
        <fullName evidence="6">Staphyloferrin B biosynthesis protein SbnA</fullName>
    </alternativeName>
</protein>
<sequence>MIEKSQACHDSLLDSVGQTPMVQLHQLFPKHEVFAKLEYMNPGGSMKDRPAKYIIEHGIKHGLITENTHLIESTSGNLGIALAMIAKIKGLKLTCVVDPKISPTNLKIIKSYGANVEMVEEPDAHGGYLMTRIAKVQELLATIDDAYWINQYANELNWQSHYHGAGTEIVETIKQPIDYFVAPVSTTGSIMGMSRKIKEVHPNAQIVAVDAKGSVIFGDKPINRELPGIGASRVPEILNRSEINQVIHVDDYQSALGCRKLIDYEGIFAGGSTGSIIAAIEQLITSIEEGATIVTILPDRGDRYLDLVYSDTWLEKMKSRQGVKSE</sequence>
<accession>Q2G1N3</accession>
<accession>Q6X7U7</accession>
<evidence type="ECO:0000250" key="1">
    <source>
        <dbReference type="UniProtKB" id="A6QDA0"/>
    </source>
</evidence>
<evidence type="ECO:0000269" key="2">
    <source>
    </source>
</evidence>
<evidence type="ECO:0000269" key="3">
    <source>
    </source>
</evidence>
<evidence type="ECO:0000269" key="4">
    <source>
    </source>
</evidence>
<evidence type="ECO:0000303" key="5">
    <source>
    </source>
</evidence>
<evidence type="ECO:0000305" key="6"/>